<protein>
    <recommendedName>
        <fullName>Elongation factor 1-alpha</fullName>
        <shortName>EF-1-alpha</shortName>
    </recommendedName>
    <alternativeName>
        <fullName>50 kDa actin-binding protein</fullName>
    </alternativeName>
    <alternativeName>
        <fullName>ABP-50</fullName>
    </alternativeName>
</protein>
<accession>P0CT32</accession>
<accession>P18624</accession>
<accession>Q55E03</accession>
<proteinExistence type="evidence at protein level"/>
<organism>
    <name type="scientific">Dictyostelium discoideum</name>
    <name type="common">Social amoeba</name>
    <dbReference type="NCBI Taxonomy" id="44689"/>
    <lineage>
        <taxon>Eukaryota</taxon>
        <taxon>Amoebozoa</taxon>
        <taxon>Evosea</taxon>
        <taxon>Eumycetozoa</taxon>
        <taxon>Dictyostelia</taxon>
        <taxon>Dictyosteliales</taxon>
        <taxon>Dictyosteliaceae</taxon>
        <taxon>Dictyostelium</taxon>
    </lineage>
</organism>
<dbReference type="EMBL" id="X55972">
    <property type="protein sequence ID" value="CAA39442.1"/>
    <property type="molecule type" value="mRNA"/>
</dbReference>
<dbReference type="EMBL" id="AAFI02000005">
    <property type="protein sequence ID" value="EAL71918.1"/>
    <property type="molecule type" value="Genomic_DNA"/>
</dbReference>
<dbReference type="PIR" id="S11665">
    <property type="entry name" value="S11665"/>
</dbReference>
<dbReference type="RefSeq" id="XP_645839.1">
    <property type="nucleotide sequence ID" value="XM_640747.1"/>
</dbReference>
<dbReference type="SMR" id="P0CT32"/>
<dbReference type="FunCoup" id="P0CT32">
    <property type="interactions" value="373"/>
</dbReference>
<dbReference type="STRING" id="44689.P0CT32"/>
<dbReference type="EnsemblProtists" id="EAL71918">
    <property type="protein sequence ID" value="EAL71918"/>
    <property type="gene ID" value="DDB_G0269136"/>
</dbReference>
<dbReference type="GeneID" id="8616783"/>
<dbReference type="KEGG" id="ddi:DDB_G0269134"/>
<dbReference type="KEGG" id="ddi:DDB_G0269136"/>
<dbReference type="dictyBase" id="DDB_G0269136">
    <property type="gene designation" value="efaAII"/>
</dbReference>
<dbReference type="VEuPathDB" id="AmoebaDB:DDB_G0269134"/>
<dbReference type="HOGENOM" id="CLU_007265_3_5_1"/>
<dbReference type="InParanoid" id="P0CT32"/>
<dbReference type="OMA" id="AIRDMGM"/>
<dbReference type="PhylomeDB" id="P0CT32"/>
<dbReference type="Reactome" id="R-DDI-156842">
    <property type="pathway name" value="Eukaryotic Translation Elongation"/>
</dbReference>
<dbReference type="Reactome" id="R-DDI-3371511">
    <property type="pathway name" value="HSF1 activation"/>
</dbReference>
<dbReference type="Reactome" id="R-DDI-6798695">
    <property type="pathway name" value="Neutrophil degranulation"/>
</dbReference>
<dbReference type="Reactome" id="R-DDI-8876725">
    <property type="pathway name" value="Protein methylation"/>
</dbReference>
<dbReference type="PRO" id="PR:P0CT32"/>
<dbReference type="Proteomes" id="UP000002195">
    <property type="component" value="Chromosome 1"/>
</dbReference>
<dbReference type="GO" id="GO:0005938">
    <property type="term" value="C:cell cortex"/>
    <property type="evidence" value="ECO:0000314"/>
    <property type="project" value="dictyBase"/>
</dbReference>
<dbReference type="GO" id="GO:0005829">
    <property type="term" value="C:cytosol"/>
    <property type="evidence" value="ECO:0000314"/>
    <property type="project" value="dictyBase"/>
</dbReference>
<dbReference type="GO" id="GO:0030175">
    <property type="term" value="C:filopodium"/>
    <property type="evidence" value="ECO:0000314"/>
    <property type="project" value="dictyBase"/>
</dbReference>
<dbReference type="GO" id="GO:0030027">
    <property type="term" value="C:lamellipodium"/>
    <property type="evidence" value="ECO:0000314"/>
    <property type="project" value="dictyBase"/>
</dbReference>
<dbReference type="GO" id="GO:0005811">
    <property type="term" value="C:lipid droplet"/>
    <property type="evidence" value="ECO:0007005"/>
    <property type="project" value="dictyBase"/>
</dbReference>
<dbReference type="GO" id="GO:0045335">
    <property type="term" value="C:phagocytic vesicle"/>
    <property type="evidence" value="ECO:0007005"/>
    <property type="project" value="dictyBase"/>
</dbReference>
<dbReference type="GO" id="GO:0031143">
    <property type="term" value="C:pseudopodium"/>
    <property type="evidence" value="ECO:0000314"/>
    <property type="project" value="dictyBase"/>
</dbReference>
<dbReference type="GO" id="GO:0051015">
    <property type="term" value="F:actin filament binding"/>
    <property type="evidence" value="ECO:0000314"/>
    <property type="project" value="dictyBase"/>
</dbReference>
<dbReference type="GO" id="GO:0003785">
    <property type="term" value="F:actin monomer binding"/>
    <property type="evidence" value="ECO:0000314"/>
    <property type="project" value="dictyBase"/>
</dbReference>
<dbReference type="GO" id="GO:0005525">
    <property type="term" value="F:GTP binding"/>
    <property type="evidence" value="ECO:0007669"/>
    <property type="project" value="UniProtKB-KW"/>
</dbReference>
<dbReference type="GO" id="GO:0003924">
    <property type="term" value="F:GTPase activity"/>
    <property type="evidence" value="ECO:0000318"/>
    <property type="project" value="GO_Central"/>
</dbReference>
<dbReference type="GO" id="GO:0003746">
    <property type="term" value="F:translation elongation factor activity"/>
    <property type="evidence" value="ECO:0000314"/>
    <property type="project" value="dictyBase"/>
</dbReference>
<dbReference type="GO" id="GO:0051017">
    <property type="term" value="P:actin filament bundle assembly"/>
    <property type="evidence" value="ECO:0000314"/>
    <property type="project" value="dictyBase"/>
</dbReference>
<dbReference type="GO" id="GO:0010446">
    <property type="term" value="P:response to alkaline pH"/>
    <property type="evidence" value="ECO:0000314"/>
    <property type="project" value="dictyBase"/>
</dbReference>
<dbReference type="GO" id="GO:0006412">
    <property type="term" value="P:translation"/>
    <property type="evidence" value="ECO:0000314"/>
    <property type="project" value="dictyBase"/>
</dbReference>
<dbReference type="GO" id="GO:0006414">
    <property type="term" value="P:translational elongation"/>
    <property type="evidence" value="ECO:0000314"/>
    <property type="project" value="dictyBase"/>
</dbReference>
<dbReference type="CDD" id="cd01883">
    <property type="entry name" value="EF1_alpha"/>
    <property type="match status" value="1"/>
</dbReference>
<dbReference type="CDD" id="cd03693">
    <property type="entry name" value="EF1_alpha_II"/>
    <property type="match status" value="1"/>
</dbReference>
<dbReference type="CDD" id="cd03705">
    <property type="entry name" value="EF1_alpha_III"/>
    <property type="match status" value="1"/>
</dbReference>
<dbReference type="FunFam" id="2.40.30.10:FF:000003">
    <property type="entry name" value="Elongation factor 1-alpha"/>
    <property type="match status" value="1"/>
</dbReference>
<dbReference type="FunFam" id="2.40.30.10:FF:000005">
    <property type="entry name" value="Elongation factor 1-alpha"/>
    <property type="match status" value="1"/>
</dbReference>
<dbReference type="FunFam" id="3.40.50.300:FF:000255">
    <property type="entry name" value="Elongation factor 1-alpha"/>
    <property type="match status" value="1"/>
</dbReference>
<dbReference type="Gene3D" id="3.40.50.300">
    <property type="entry name" value="P-loop containing nucleotide triphosphate hydrolases"/>
    <property type="match status" value="1"/>
</dbReference>
<dbReference type="Gene3D" id="2.40.30.10">
    <property type="entry name" value="Translation factors"/>
    <property type="match status" value="2"/>
</dbReference>
<dbReference type="HAMAP" id="MF_00118_A">
    <property type="entry name" value="EF_Tu_A"/>
    <property type="match status" value="1"/>
</dbReference>
<dbReference type="InterPro" id="IPR004161">
    <property type="entry name" value="EFTu-like_2"/>
</dbReference>
<dbReference type="InterPro" id="IPR031157">
    <property type="entry name" value="G_TR_CS"/>
</dbReference>
<dbReference type="InterPro" id="IPR054696">
    <property type="entry name" value="GTP-eEF1A_C"/>
</dbReference>
<dbReference type="InterPro" id="IPR027417">
    <property type="entry name" value="P-loop_NTPase"/>
</dbReference>
<dbReference type="InterPro" id="IPR005225">
    <property type="entry name" value="Small_GTP-bd"/>
</dbReference>
<dbReference type="InterPro" id="IPR000795">
    <property type="entry name" value="T_Tr_GTP-bd_dom"/>
</dbReference>
<dbReference type="InterPro" id="IPR050100">
    <property type="entry name" value="TRAFAC_GTPase_members"/>
</dbReference>
<dbReference type="InterPro" id="IPR009000">
    <property type="entry name" value="Transl_B-barrel_sf"/>
</dbReference>
<dbReference type="InterPro" id="IPR009001">
    <property type="entry name" value="Transl_elong_EF1A/Init_IF2_C"/>
</dbReference>
<dbReference type="InterPro" id="IPR004539">
    <property type="entry name" value="Transl_elong_EF1A_euk/arc"/>
</dbReference>
<dbReference type="NCBIfam" id="TIGR00483">
    <property type="entry name" value="EF-1_alpha"/>
    <property type="match status" value="1"/>
</dbReference>
<dbReference type="NCBIfam" id="NF008969">
    <property type="entry name" value="PRK12317.1"/>
    <property type="match status" value="1"/>
</dbReference>
<dbReference type="NCBIfam" id="TIGR00231">
    <property type="entry name" value="small_GTP"/>
    <property type="match status" value="1"/>
</dbReference>
<dbReference type="PANTHER" id="PTHR23115">
    <property type="entry name" value="TRANSLATION FACTOR"/>
    <property type="match status" value="1"/>
</dbReference>
<dbReference type="Pfam" id="PF22594">
    <property type="entry name" value="GTP-eEF1A_C"/>
    <property type="match status" value="1"/>
</dbReference>
<dbReference type="Pfam" id="PF00009">
    <property type="entry name" value="GTP_EFTU"/>
    <property type="match status" value="1"/>
</dbReference>
<dbReference type="Pfam" id="PF03144">
    <property type="entry name" value="GTP_EFTU_D2"/>
    <property type="match status" value="1"/>
</dbReference>
<dbReference type="PRINTS" id="PR00315">
    <property type="entry name" value="ELONGATNFCT"/>
</dbReference>
<dbReference type="SUPFAM" id="SSF50465">
    <property type="entry name" value="EF-Tu/eEF-1alpha/eIF2-gamma C-terminal domain"/>
    <property type="match status" value="1"/>
</dbReference>
<dbReference type="SUPFAM" id="SSF52540">
    <property type="entry name" value="P-loop containing nucleoside triphosphate hydrolases"/>
    <property type="match status" value="1"/>
</dbReference>
<dbReference type="SUPFAM" id="SSF50447">
    <property type="entry name" value="Translation proteins"/>
    <property type="match status" value="1"/>
</dbReference>
<dbReference type="PROSITE" id="PS00301">
    <property type="entry name" value="G_TR_1"/>
    <property type="match status" value="1"/>
</dbReference>
<dbReference type="PROSITE" id="PS51722">
    <property type="entry name" value="G_TR_2"/>
    <property type="match status" value="1"/>
</dbReference>
<reference key="1">
    <citation type="journal article" date="2005" name="Nature">
        <title>The genome of the social amoeba Dictyostelium discoideum.</title>
        <authorList>
            <person name="Eichinger L."/>
            <person name="Pachebat J.A."/>
            <person name="Gloeckner G."/>
            <person name="Rajandream M.A."/>
            <person name="Sucgang R."/>
            <person name="Berriman M."/>
            <person name="Song J."/>
            <person name="Olsen R."/>
            <person name="Szafranski K."/>
            <person name="Xu Q."/>
            <person name="Tunggal B."/>
            <person name="Kummerfeld S."/>
            <person name="Madera M."/>
            <person name="Konfortov B.A."/>
            <person name="Rivero F."/>
            <person name="Bankier A.T."/>
            <person name="Lehmann R."/>
            <person name="Hamlin N."/>
            <person name="Davies R."/>
            <person name="Gaudet P."/>
            <person name="Fey P."/>
            <person name="Pilcher K."/>
            <person name="Chen G."/>
            <person name="Saunders D."/>
            <person name="Sodergren E.J."/>
            <person name="Davis P."/>
            <person name="Kerhornou A."/>
            <person name="Nie X."/>
            <person name="Hall N."/>
            <person name="Anjard C."/>
            <person name="Hemphill L."/>
            <person name="Bason N."/>
            <person name="Farbrother P."/>
            <person name="Desany B."/>
            <person name="Just E."/>
            <person name="Morio T."/>
            <person name="Rost R."/>
            <person name="Churcher C.M."/>
            <person name="Cooper J."/>
            <person name="Haydock S."/>
            <person name="van Driessche N."/>
            <person name="Cronin A."/>
            <person name="Goodhead I."/>
            <person name="Muzny D.M."/>
            <person name="Mourier T."/>
            <person name="Pain A."/>
            <person name="Lu M."/>
            <person name="Harper D."/>
            <person name="Lindsay R."/>
            <person name="Hauser H."/>
            <person name="James K.D."/>
            <person name="Quiles M."/>
            <person name="Madan Babu M."/>
            <person name="Saito T."/>
            <person name="Buchrieser C."/>
            <person name="Wardroper A."/>
            <person name="Felder M."/>
            <person name="Thangavelu M."/>
            <person name="Johnson D."/>
            <person name="Knights A."/>
            <person name="Loulseged H."/>
            <person name="Mungall K.L."/>
            <person name="Oliver K."/>
            <person name="Price C."/>
            <person name="Quail M.A."/>
            <person name="Urushihara H."/>
            <person name="Hernandez J."/>
            <person name="Rabbinowitsch E."/>
            <person name="Steffen D."/>
            <person name="Sanders M."/>
            <person name="Ma J."/>
            <person name="Kohara Y."/>
            <person name="Sharp S."/>
            <person name="Simmonds M.N."/>
            <person name="Spiegler S."/>
            <person name="Tivey A."/>
            <person name="Sugano S."/>
            <person name="White B."/>
            <person name="Walker D."/>
            <person name="Woodward J.R."/>
            <person name="Winckler T."/>
            <person name="Tanaka Y."/>
            <person name="Shaulsky G."/>
            <person name="Schleicher M."/>
            <person name="Weinstock G.M."/>
            <person name="Rosenthal A."/>
            <person name="Cox E.C."/>
            <person name="Chisholm R.L."/>
            <person name="Gibbs R.A."/>
            <person name="Loomis W.F."/>
            <person name="Platzer M."/>
            <person name="Kay R.R."/>
            <person name="Williams J.G."/>
            <person name="Dear P.H."/>
            <person name="Noegel A.A."/>
            <person name="Barrell B.G."/>
            <person name="Kuspa A."/>
        </authorList>
    </citation>
    <scope>NUCLEOTIDE SEQUENCE [LARGE SCALE GENOMIC DNA]</scope>
    <source>
        <strain>AX4</strain>
    </source>
</reference>
<reference key="2">
    <citation type="journal article" date="1990" name="Nature">
        <title>Identification of an actin-binding protein from Dictyostelium as elongation factor 1a.</title>
        <authorList>
            <person name="Yang F."/>
            <person name="Demma M."/>
            <person name="Warren V."/>
            <person name="Dharmawardhane S."/>
            <person name="Condeelis J."/>
        </authorList>
    </citation>
    <scope>NUCLEOTIDE SEQUENCE [MRNA] OF 4-450</scope>
    <scope>PARTIAL PROTEIN SEQUENCE</scope>
    <scope>INTERACTION WITH ACTIN</scope>
    <source>
        <strain>AX3</strain>
    </source>
</reference>
<reference key="3">
    <citation type="journal article" date="2006" name="Mol. Cell. Proteomics">
        <title>Proteomics fingerprinting of phagosome maturation and evidence for the role of a Galpha during uptake.</title>
        <authorList>
            <person name="Gotthardt D."/>
            <person name="Blancheteau V."/>
            <person name="Bosserhoff A."/>
            <person name="Ruppert T."/>
            <person name="Delorenzi M."/>
            <person name="Soldati T."/>
        </authorList>
    </citation>
    <scope>IDENTIFICATION BY MASS SPECTROMETRY [LARGE SCALE ANALYSIS]</scope>
    <source>
        <strain>AX2</strain>
    </source>
</reference>
<evidence type="ECO:0000250" key="1"/>
<evidence type="ECO:0000305" key="2"/>
<keyword id="KW-0009">Actin-binding</keyword>
<keyword id="KW-0963">Cytoplasm</keyword>
<keyword id="KW-0903">Direct protein sequencing</keyword>
<keyword id="KW-0251">Elongation factor</keyword>
<keyword id="KW-0342">GTP-binding</keyword>
<keyword id="KW-0547">Nucleotide-binding</keyword>
<keyword id="KW-0648">Protein biosynthesis</keyword>
<keyword id="KW-1185">Reference proteome</keyword>
<sequence length="453" mass="49662">MGKEKTHINIVVIGHVDAGKSTTTGHLIYKCGGIDKRVIEKYEKEASEMGKQSFKYAWVMDKLKAERERGITIDIALWKFETSKYYFTIIDAPGHRDFIKNMITGTSQADCAVLVIASPTGEFEAGIAKNGQTREHALLAYTLGVKQMIVAINKMDEKSTNYSQARYDEIVKEVSSFIKKIGYNPEKVAFVPISGWNGDNMLERSDKMEWYKGPTLLEALDAIVEPKRPHDKPLRIPLQDVYKIGGIGTVPVGRVETGIIKPGMVVTFAPAGLSTEVKSVEMHHEQLPEARPGDNVGFNVKNVSVKEIKRGMVAGDSKNDPPQETEKFVAQVIVLNHPGQIHAGYSPVLDCHTAHIACKFTEIVDKVDRRTGAVVAKEGTAAVVLKNGDAAMVELTPSRPMCVESFTEYPPLGRFAVRDMRQTVAVGVIKSTVKKAPGKAGDKKGAAAPSKKK</sequence>
<name>EF1A2_DICDI</name>
<feature type="chain" id="PRO_0000424064" description="Elongation factor 1-alpha">
    <location>
        <begin position="1"/>
        <end position="453"/>
    </location>
</feature>
<feature type="domain" description="tr-type G">
    <location>
        <begin position="5"/>
        <end position="230"/>
    </location>
</feature>
<feature type="region of interest" description="G1" evidence="1">
    <location>
        <begin position="14"/>
        <end position="21"/>
    </location>
</feature>
<feature type="region of interest" description="G2" evidence="1">
    <location>
        <begin position="70"/>
        <end position="74"/>
    </location>
</feature>
<feature type="region of interest" description="G3" evidence="1">
    <location>
        <begin position="91"/>
        <end position="94"/>
    </location>
</feature>
<feature type="region of interest" description="G4" evidence="1">
    <location>
        <begin position="153"/>
        <end position="156"/>
    </location>
</feature>
<feature type="region of interest" description="G5" evidence="1">
    <location>
        <begin position="194"/>
        <end position="196"/>
    </location>
</feature>
<feature type="binding site" evidence="1">
    <location>
        <begin position="14"/>
        <end position="21"/>
    </location>
    <ligand>
        <name>GTP</name>
        <dbReference type="ChEBI" id="CHEBI:37565"/>
    </ligand>
</feature>
<feature type="binding site" evidence="1">
    <location>
        <begin position="91"/>
        <end position="95"/>
    </location>
    <ligand>
        <name>GTP</name>
        <dbReference type="ChEBI" id="CHEBI:37565"/>
    </ligand>
</feature>
<feature type="binding site" evidence="1">
    <location>
        <begin position="153"/>
        <end position="156"/>
    </location>
    <ligand>
        <name>GTP</name>
        <dbReference type="ChEBI" id="CHEBI:37565"/>
    </ligand>
</feature>
<comment type="function">
    <text>This protein promotes the GTP-dependent binding of aminoacyl-tRNA to the A-site of ribosomes during protein biosynthesis. It is also an abundant actin filament bundling protein.</text>
</comment>
<comment type="subunit">
    <text>Binds to actin.</text>
</comment>
<comment type="subcellular location">
    <subcellularLocation>
        <location>Cytoplasm</location>
    </subcellularLocation>
</comment>
<comment type="similarity">
    <text evidence="2">Belongs to the TRAFAC class translation factor GTPase superfamily. Classic translation factor GTPase family. EF-Tu/EF-1A subfamily.</text>
</comment>
<gene>
    <name type="primary">eef1a2</name>
    <name type="synonym">efaa2</name>
    <name type="synonym">efaAII</name>
    <name type="ORF">DDB_G0269136</name>
</gene>